<dbReference type="EMBL" id="AE017226">
    <property type="protein sequence ID" value="AAS12426.1"/>
    <property type="molecule type" value="Genomic_DNA"/>
</dbReference>
<dbReference type="RefSeq" id="NP_972515.1">
    <property type="nucleotide sequence ID" value="NC_002967.9"/>
</dbReference>
<dbReference type="RefSeq" id="WP_002669725.1">
    <property type="nucleotide sequence ID" value="NC_002967.9"/>
</dbReference>
<dbReference type="SMR" id="Q73LF2"/>
<dbReference type="STRING" id="243275.TDE_1912"/>
<dbReference type="PaxDb" id="243275-TDE_1912"/>
<dbReference type="GeneID" id="2740410"/>
<dbReference type="KEGG" id="tde:TDE_1912"/>
<dbReference type="PATRIC" id="fig|243275.7.peg.1809"/>
<dbReference type="eggNOG" id="COG2344">
    <property type="taxonomic scope" value="Bacteria"/>
</dbReference>
<dbReference type="HOGENOM" id="CLU_061534_1_0_12"/>
<dbReference type="OrthoDB" id="9784760at2"/>
<dbReference type="Proteomes" id="UP000008212">
    <property type="component" value="Chromosome"/>
</dbReference>
<dbReference type="GO" id="GO:0005737">
    <property type="term" value="C:cytoplasm"/>
    <property type="evidence" value="ECO:0007669"/>
    <property type="project" value="UniProtKB-SubCell"/>
</dbReference>
<dbReference type="GO" id="GO:0003677">
    <property type="term" value="F:DNA binding"/>
    <property type="evidence" value="ECO:0007669"/>
    <property type="project" value="UniProtKB-UniRule"/>
</dbReference>
<dbReference type="GO" id="GO:0003700">
    <property type="term" value="F:DNA-binding transcription factor activity"/>
    <property type="evidence" value="ECO:0007669"/>
    <property type="project" value="UniProtKB-UniRule"/>
</dbReference>
<dbReference type="GO" id="GO:0045892">
    <property type="term" value="P:negative regulation of DNA-templated transcription"/>
    <property type="evidence" value="ECO:0007669"/>
    <property type="project" value="InterPro"/>
</dbReference>
<dbReference type="GO" id="GO:0051775">
    <property type="term" value="P:response to redox state"/>
    <property type="evidence" value="ECO:0007669"/>
    <property type="project" value="InterPro"/>
</dbReference>
<dbReference type="Gene3D" id="3.40.50.720">
    <property type="entry name" value="NAD(P)-binding Rossmann-like Domain"/>
    <property type="match status" value="1"/>
</dbReference>
<dbReference type="Gene3D" id="1.10.10.10">
    <property type="entry name" value="Winged helix-like DNA-binding domain superfamily/Winged helix DNA-binding domain"/>
    <property type="match status" value="1"/>
</dbReference>
<dbReference type="HAMAP" id="MF_01131">
    <property type="entry name" value="Rex"/>
    <property type="match status" value="1"/>
</dbReference>
<dbReference type="InterPro" id="IPR003781">
    <property type="entry name" value="CoA-bd"/>
</dbReference>
<dbReference type="InterPro" id="IPR036291">
    <property type="entry name" value="NAD(P)-bd_dom_sf"/>
</dbReference>
<dbReference type="InterPro" id="IPR009718">
    <property type="entry name" value="Rex_DNA-bd_C_dom"/>
</dbReference>
<dbReference type="InterPro" id="IPR022876">
    <property type="entry name" value="Tscrpt_rep_Rex"/>
</dbReference>
<dbReference type="InterPro" id="IPR036388">
    <property type="entry name" value="WH-like_DNA-bd_sf"/>
</dbReference>
<dbReference type="InterPro" id="IPR036390">
    <property type="entry name" value="WH_DNA-bd_sf"/>
</dbReference>
<dbReference type="NCBIfam" id="NF003994">
    <property type="entry name" value="PRK05472.2-3"/>
    <property type="match status" value="1"/>
</dbReference>
<dbReference type="NCBIfam" id="NF003995">
    <property type="entry name" value="PRK05472.2-4"/>
    <property type="match status" value="1"/>
</dbReference>
<dbReference type="NCBIfam" id="NF003996">
    <property type="entry name" value="PRK05472.2-5"/>
    <property type="match status" value="1"/>
</dbReference>
<dbReference type="PANTHER" id="PTHR35786">
    <property type="entry name" value="REDOX-SENSING TRANSCRIPTIONAL REPRESSOR REX"/>
    <property type="match status" value="1"/>
</dbReference>
<dbReference type="PANTHER" id="PTHR35786:SF1">
    <property type="entry name" value="REDOX-SENSING TRANSCRIPTIONAL REPRESSOR REX 1"/>
    <property type="match status" value="1"/>
</dbReference>
<dbReference type="Pfam" id="PF02629">
    <property type="entry name" value="CoA_binding"/>
    <property type="match status" value="1"/>
</dbReference>
<dbReference type="Pfam" id="PF06971">
    <property type="entry name" value="Put_DNA-bind_N"/>
    <property type="match status" value="1"/>
</dbReference>
<dbReference type="SMART" id="SM00881">
    <property type="entry name" value="CoA_binding"/>
    <property type="match status" value="1"/>
</dbReference>
<dbReference type="SUPFAM" id="SSF51735">
    <property type="entry name" value="NAD(P)-binding Rossmann-fold domains"/>
    <property type="match status" value="1"/>
</dbReference>
<dbReference type="SUPFAM" id="SSF46785">
    <property type="entry name" value="Winged helix' DNA-binding domain"/>
    <property type="match status" value="1"/>
</dbReference>
<comment type="function">
    <text evidence="1">Modulates transcription in response to changes in cellular NADH/NAD(+) redox state.</text>
</comment>
<comment type="subunit">
    <text evidence="1">Homodimer.</text>
</comment>
<comment type="subcellular location">
    <subcellularLocation>
        <location evidence="1">Cytoplasm</location>
    </subcellularLocation>
</comment>
<comment type="similarity">
    <text evidence="1">Belongs to the transcriptional regulatory Rex family.</text>
</comment>
<name>REX_TREDE</name>
<evidence type="ECO:0000255" key="1">
    <source>
        <dbReference type="HAMAP-Rule" id="MF_01131"/>
    </source>
</evidence>
<gene>
    <name evidence="1" type="primary">rex</name>
    <name type="ordered locus">TDE_1912</name>
</gene>
<accession>Q73LF2</accession>
<reference key="1">
    <citation type="journal article" date="2004" name="Proc. Natl. Acad. Sci. U.S.A.">
        <title>Comparison of the genome of the oral pathogen Treponema denticola with other spirochete genomes.</title>
        <authorList>
            <person name="Seshadri R."/>
            <person name="Myers G.S.A."/>
            <person name="Tettelin H."/>
            <person name="Eisen J.A."/>
            <person name="Heidelberg J.F."/>
            <person name="Dodson R.J."/>
            <person name="Davidsen T.M."/>
            <person name="DeBoy R.T."/>
            <person name="Fouts D.E."/>
            <person name="Haft D.H."/>
            <person name="Selengut J."/>
            <person name="Ren Q."/>
            <person name="Brinkac L.M."/>
            <person name="Madupu R."/>
            <person name="Kolonay J.F."/>
            <person name="Durkin S.A."/>
            <person name="Daugherty S.C."/>
            <person name="Shetty J."/>
            <person name="Shvartsbeyn A."/>
            <person name="Gebregeorgis E."/>
            <person name="Geer K."/>
            <person name="Tsegaye G."/>
            <person name="Malek J.A."/>
            <person name="Ayodeji B."/>
            <person name="Shatsman S."/>
            <person name="McLeod M.P."/>
            <person name="Smajs D."/>
            <person name="Howell J.K."/>
            <person name="Pal S."/>
            <person name="Amin A."/>
            <person name="Vashisth P."/>
            <person name="McNeill T.Z."/>
            <person name="Xiang Q."/>
            <person name="Sodergren E."/>
            <person name="Baca E."/>
            <person name="Weinstock G.M."/>
            <person name="Norris S.J."/>
            <person name="Fraser C.M."/>
            <person name="Paulsen I.T."/>
        </authorList>
    </citation>
    <scope>NUCLEOTIDE SEQUENCE [LARGE SCALE GENOMIC DNA]</scope>
    <source>
        <strain>ATCC 35405 / DSM 14222 / CIP 103919 / JCM 8153 / KCTC 15104</strain>
    </source>
</reference>
<keyword id="KW-0963">Cytoplasm</keyword>
<keyword id="KW-0238">DNA-binding</keyword>
<keyword id="KW-0520">NAD</keyword>
<keyword id="KW-1185">Reference proteome</keyword>
<keyword id="KW-0678">Repressor</keyword>
<keyword id="KW-0804">Transcription</keyword>
<keyword id="KW-0805">Transcription regulation</keyword>
<organism>
    <name type="scientific">Treponema denticola (strain ATCC 35405 / DSM 14222 / CIP 103919 / JCM 8153 / KCTC 15104)</name>
    <dbReference type="NCBI Taxonomy" id="243275"/>
    <lineage>
        <taxon>Bacteria</taxon>
        <taxon>Pseudomonadati</taxon>
        <taxon>Spirochaetota</taxon>
        <taxon>Spirochaetia</taxon>
        <taxon>Spirochaetales</taxon>
        <taxon>Treponemataceae</taxon>
        <taxon>Treponema</taxon>
    </lineage>
</organism>
<feature type="chain" id="PRO_1000073049" description="Redox-sensing transcriptional repressor Rex">
    <location>
        <begin position="1"/>
        <end position="210"/>
    </location>
</feature>
<feature type="DNA-binding region" description="H-T-H motif" evidence="1">
    <location>
        <begin position="17"/>
        <end position="56"/>
    </location>
</feature>
<feature type="binding site" evidence="1">
    <location>
        <begin position="91"/>
        <end position="96"/>
    </location>
    <ligand>
        <name>NAD(+)</name>
        <dbReference type="ChEBI" id="CHEBI:57540"/>
    </ligand>
</feature>
<sequence length="210" mass="23128">MAKQKVPAAPSVRRLPSYLHLVKKAEADKLEYISGTVIAEELELEPIQVRKDLTITGIVGKPKKGYPVKLLITAIEKFLGWNKEKKAFVIGAGSLGTALSGYQGFKEHGLDICAAFDSDKRKIGKEIHELPVFGMDELETKVKEYKPEIAILTVPSKYAQEAANAIVKAGIKAIWNFTNIKITVPDKVIVQKEDLSSGYAMLGVMMNTKK</sequence>
<proteinExistence type="inferred from homology"/>
<protein>
    <recommendedName>
        <fullName evidence="1">Redox-sensing transcriptional repressor Rex</fullName>
    </recommendedName>
</protein>